<keyword id="KW-0007">Acetylation</keyword>
<keyword id="KW-0113">Calvin cycle</keyword>
<keyword id="KW-0120">Carbon dioxide fixation</keyword>
<keyword id="KW-0150">Chloroplast</keyword>
<keyword id="KW-1015">Disulfide bond</keyword>
<keyword id="KW-0456">Lyase</keyword>
<keyword id="KW-0460">Magnesium</keyword>
<keyword id="KW-0479">Metal-binding</keyword>
<keyword id="KW-0488">Methylation</keyword>
<keyword id="KW-0503">Monooxygenase</keyword>
<keyword id="KW-0560">Oxidoreductase</keyword>
<keyword id="KW-0601">Photorespiration</keyword>
<keyword id="KW-0602">Photosynthesis</keyword>
<keyword id="KW-0934">Plastid</keyword>
<keyword id="KW-1185">Reference proteome</keyword>
<dbReference type="EC" id="4.1.1.39" evidence="1"/>
<dbReference type="EMBL" id="X79900">
    <property type="status" value="NOT_ANNOTATED_CDS"/>
    <property type="molecule type" value="Genomic_DNA"/>
</dbReference>
<dbReference type="SMR" id="P56647"/>
<dbReference type="FunCoup" id="P56647">
    <property type="interactions" value="449"/>
</dbReference>
<dbReference type="STRING" id="4555.P56647"/>
<dbReference type="InParanoid" id="P56647"/>
<dbReference type="Proteomes" id="UP000004995">
    <property type="component" value="Unassembled WGS sequence"/>
</dbReference>
<dbReference type="GO" id="GO:0009507">
    <property type="term" value="C:chloroplast"/>
    <property type="evidence" value="ECO:0007669"/>
    <property type="project" value="UniProtKB-SubCell"/>
</dbReference>
<dbReference type="GO" id="GO:0000287">
    <property type="term" value="F:magnesium ion binding"/>
    <property type="evidence" value="ECO:0007669"/>
    <property type="project" value="UniProtKB-UniRule"/>
</dbReference>
<dbReference type="GO" id="GO:0004497">
    <property type="term" value="F:monooxygenase activity"/>
    <property type="evidence" value="ECO:0007669"/>
    <property type="project" value="UniProtKB-KW"/>
</dbReference>
<dbReference type="GO" id="GO:0016984">
    <property type="term" value="F:ribulose-bisphosphate carboxylase activity"/>
    <property type="evidence" value="ECO:0007669"/>
    <property type="project" value="UniProtKB-UniRule"/>
</dbReference>
<dbReference type="GO" id="GO:0009853">
    <property type="term" value="P:photorespiration"/>
    <property type="evidence" value="ECO:0007669"/>
    <property type="project" value="UniProtKB-KW"/>
</dbReference>
<dbReference type="GO" id="GO:0019253">
    <property type="term" value="P:reductive pentose-phosphate cycle"/>
    <property type="evidence" value="ECO:0007669"/>
    <property type="project" value="UniProtKB-UniRule"/>
</dbReference>
<dbReference type="CDD" id="cd08212">
    <property type="entry name" value="RuBisCO_large_I"/>
    <property type="match status" value="1"/>
</dbReference>
<dbReference type="FunFam" id="3.20.20.110:FF:000001">
    <property type="entry name" value="Ribulose bisphosphate carboxylase large chain"/>
    <property type="match status" value="1"/>
</dbReference>
<dbReference type="FunFam" id="3.30.70.150:FF:000001">
    <property type="entry name" value="Ribulose bisphosphate carboxylase large chain"/>
    <property type="match status" value="1"/>
</dbReference>
<dbReference type="Gene3D" id="3.20.20.110">
    <property type="entry name" value="Ribulose bisphosphate carboxylase, large subunit, C-terminal domain"/>
    <property type="match status" value="1"/>
</dbReference>
<dbReference type="Gene3D" id="3.30.70.150">
    <property type="entry name" value="RuBisCO large subunit, N-terminal domain"/>
    <property type="match status" value="1"/>
</dbReference>
<dbReference type="HAMAP" id="MF_01338">
    <property type="entry name" value="RuBisCO_L_type1"/>
    <property type="match status" value="1"/>
</dbReference>
<dbReference type="InterPro" id="IPR033966">
    <property type="entry name" value="RuBisCO"/>
</dbReference>
<dbReference type="InterPro" id="IPR020878">
    <property type="entry name" value="RuBisCo_large_chain_AS"/>
</dbReference>
<dbReference type="InterPro" id="IPR000685">
    <property type="entry name" value="RuBisCO_lsu_C"/>
</dbReference>
<dbReference type="InterPro" id="IPR036376">
    <property type="entry name" value="RuBisCO_lsu_C_sf"/>
</dbReference>
<dbReference type="InterPro" id="IPR017443">
    <property type="entry name" value="RuBisCO_lsu_fd_N"/>
</dbReference>
<dbReference type="InterPro" id="IPR036422">
    <property type="entry name" value="RuBisCO_lsu_N_sf"/>
</dbReference>
<dbReference type="InterPro" id="IPR020888">
    <property type="entry name" value="RuBisCO_lsuI"/>
</dbReference>
<dbReference type="NCBIfam" id="NF003252">
    <property type="entry name" value="PRK04208.1"/>
    <property type="match status" value="1"/>
</dbReference>
<dbReference type="PANTHER" id="PTHR42704">
    <property type="entry name" value="RIBULOSE BISPHOSPHATE CARBOXYLASE"/>
    <property type="match status" value="1"/>
</dbReference>
<dbReference type="PANTHER" id="PTHR42704:SF20">
    <property type="entry name" value="RIBULOSE BISPHOSPHATE CARBOXYLASE LARGE CHAIN"/>
    <property type="match status" value="1"/>
</dbReference>
<dbReference type="Pfam" id="PF00016">
    <property type="entry name" value="RuBisCO_large"/>
    <property type="match status" value="1"/>
</dbReference>
<dbReference type="Pfam" id="PF02788">
    <property type="entry name" value="RuBisCO_large_N"/>
    <property type="match status" value="1"/>
</dbReference>
<dbReference type="SFLD" id="SFLDG01052">
    <property type="entry name" value="RuBisCO"/>
    <property type="match status" value="1"/>
</dbReference>
<dbReference type="SFLD" id="SFLDS00014">
    <property type="entry name" value="RuBisCO"/>
    <property type="match status" value="1"/>
</dbReference>
<dbReference type="SFLD" id="SFLDG00301">
    <property type="entry name" value="RuBisCO-like_proteins"/>
    <property type="match status" value="1"/>
</dbReference>
<dbReference type="SUPFAM" id="SSF51649">
    <property type="entry name" value="RuBisCo, C-terminal domain"/>
    <property type="match status" value="1"/>
</dbReference>
<dbReference type="SUPFAM" id="SSF54966">
    <property type="entry name" value="RuBisCO, large subunit, small (N-terminal) domain"/>
    <property type="match status" value="1"/>
</dbReference>
<dbReference type="PROSITE" id="PS00157">
    <property type="entry name" value="RUBISCO_LARGE"/>
    <property type="match status" value="1"/>
</dbReference>
<proteinExistence type="inferred from homology"/>
<organism>
    <name type="scientific">Setaria italica</name>
    <name type="common">Foxtail millet</name>
    <name type="synonym">Panicum italicum</name>
    <dbReference type="NCBI Taxonomy" id="4555"/>
    <lineage>
        <taxon>Eukaryota</taxon>
        <taxon>Viridiplantae</taxon>
        <taxon>Streptophyta</taxon>
        <taxon>Embryophyta</taxon>
        <taxon>Tracheophyta</taxon>
        <taxon>Spermatophyta</taxon>
        <taxon>Magnoliopsida</taxon>
        <taxon>Liliopsida</taxon>
        <taxon>Poales</taxon>
        <taxon>Poaceae</taxon>
        <taxon>PACMAD clade</taxon>
        <taxon>Panicoideae</taxon>
        <taxon>Panicodae</taxon>
        <taxon>Paniceae</taxon>
        <taxon>Cenchrinae</taxon>
        <taxon>Setaria</taxon>
    </lineage>
</organism>
<sequence length="476" mass="52682">MSPQTETKASVGFKAGVKDYKLTYYTPEYETKDTDILAAFRVTPQPGVPPEEAGAAVAAESSTGTWTTVWTDGLTSLDRYKGRCYHIEPVPGEADQYICYIAYPLDLFEEGSVTNMFTSIVGNVFGFKRSRALRLEDLRIPPAYAKTFQGPPHGIQVERDKLNKYGRPLLGCTIKPKLGLSAKNYGRACYECLRGGLDFTKDDENVNSQPFMRWRDRFVFCAEAIYKAQAETGEIKGHYLNATAGTCEEMIKRAAFARELGVPIVMHDYLTGGFTANTSLSYYCRDNGLLLHIHRAMHAVIDRQKNHGMHFRVLAKALRMSGGDHIHSGTVVGKLEGEREITLGFVDLLRDDFIEKDRSRGIFFTQDWASMPGVIPVASGGIHVWHMPALTEIFGDDSVLQFGGGTLGHPWGNAPGTAANRVALEACVQARNEGRDLAREGNEIIKAACKWSPELAAACEVWKEIKFEGSKAMDTL</sequence>
<protein>
    <recommendedName>
        <fullName evidence="1">Ribulose bisphosphate carboxylase large chain</fullName>
        <shortName evidence="1">RuBisCO large subunit</shortName>
        <ecNumber evidence="1">4.1.1.39</ecNumber>
    </recommendedName>
</protein>
<gene>
    <name evidence="1" type="primary">rbcL</name>
</gene>
<feature type="propeptide" id="PRO_0000031403" evidence="1">
    <location>
        <begin position="1"/>
        <end position="2"/>
    </location>
</feature>
<feature type="chain" id="PRO_0000031404" description="Ribulose bisphosphate carboxylase large chain">
    <location>
        <begin position="3"/>
        <end position="476"/>
    </location>
</feature>
<feature type="active site" description="Proton acceptor" evidence="1">
    <location>
        <position position="175"/>
    </location>
</feature>
<feature type="active site" description="Proton acceptor" evidence="1">
    <location>
        <position position="294"/>
    </location>
</feature>
<feature type="binding site" description="in homodimeric partner" evidence="1">
    <location>
        <position position="123"/>
    </location>
    <ligand>
        <name>substrate</name>
    </ligand>
</feature>
<feature type="binding site" evidence="1">
    <location>
        <position position="173"/>
    </location>
    <ligand>
        <name>substrate</name>
    </ligand>
</feature>
<feature type="binding site" evidence="1">
    <location>
        <position position="177"/>
    </location>
    <ligand>
        <name>substrate</name>
    </ligand>
</feature>
<feature type="binding site" description="via carbamate group" evidence="1">
    <location>
        <position position="201"/>
    </location>
    <ligand>
        <name>Mg(2+)</name>
        <dbReference type="ChEBI" id="CHEBI:18420"/>
    </ligand>
</feature>
<feature type="binding site" evidence="1">
    <location>
        <position position="203"/>
    </location>
    <ligand>
        <name>Mg(2+)</name>
        <dbReference type="ChEBI" id="CHEBI:18420"/>
    </ligand>
</feature>
<feature type="binding site" evidence="1">
    <location>
        <position position="204"/>
    </location>
    <ligand>
        <name>Mg(2+)</name>
        <dbReference type="ChEBI" id="CHEBI:18420"/>
    </ligand>
</feature>
<feature type="binding site" evidence="1">
    <location>
        <position position="295"/>
    </location>
    <ligand>
        <name>substrate</name>
    </ligand>
</feature>
<feature type="binding site" evidence="1">
    <location>
        <position position="327"/>
    </location>
    <ligand>
        <name>substrate</name>
    </ligand>
</feature>
<feature type="binding site" evidence="1">
    <location>
        <position position="379"/>
    </location>
    <ligand>
        <name>substrate</name>
    </ligand>
</feature>
<feature type="site" description="Transition state stabilizer" evidence="1">
    <location>
        <position position="334"/>
    </location>
</feature>
<feature type="modified residue" description="N-acetylproline" evidence="1">
    <location>
        <position position="3"/>
    </location>
</feature>
<feature type="modified residue" description="N6,N6,N6-trimethyllysine" evidence="1">
    <location>
        <position position="14"/>
    </location>
</feature>
<feature type="modified residue" description="N6-carboxylysine" evidence="1">
    <location>
        <position position="201"/>
    </location>
</feature>
<feature type="disulfide bond" description="Interchain; in linked form" evidence="1">
    <location>
        <position position="247"/>
    </location>
</feature>
<reference key="1">
    <citation type="journal article" date="1996" name="Acta Bot. Sin.">
        <title>Nucleotide sequence of ribulose-1,5-bisphosphate carboxylase/ oxygenase large subunit gene from millet (Setaria italica).</title>
        <authorList>
            <person name="Zhao Y.S."/>
            <person name="Qiao X.Y."/>
            <person name="Wu N.H."/>
            <person name="Wu X.Y."/>
        </authorList>
    </citation>
    <scope>NUCLEOTIDE SEQUENCE [GENOMIC DNA]</scope>
</reference>
<evidence type="ECO:0000255" key="1">
    <source>
        <dbReference type="HAMAP-Rule" id="MF_01338"/>
    </source>
</evidence>
<name>RBL_SETIT</name>
<accession>P56647</accession>
<geneLocation type="chloroplast"/>
<comment type="function">
    <text evidence="1">RuBisCO catalyzes two reactions: the carboxylation of D-ribulose 1,5-bisphosphate, the primary event in carbon dioxide fixation, as well as the oxidative fragmentation of the pentose substrate in the photorespiration process. Both reactions occur simultaneously and in competition at the same active site.</text>
</comment>
<comment type="catalytic activity">
    <reaction evidence="1">
        <text>2 (2R)-3-phosphoglycerate + 2 H(+) = D-ribulose 1,5-bisphosphate + CO2 + H2O</text>
        <dbReference type="Rhea" id="RHEA:23124"/>
        <dbReference type="ChEBI" id="CHEBI:15377"/>
        <dbReference type="ChEBI" id="CHEBI:15378"/>
        <dbReference type="ChEBI" id="CHEBI:16526"/>
        <dbReference type="ChEBI" id="CHEBI:57870"/>
        <dbReference type="ChEBI" id="CHEBI:58272"/>
        <dbReference type="EC" id="4.1.1.39"/>
    </reaction>
</comment>
<comment type="catalytic activity">
    <reaction evidence="1">
        <text>D-ribulose 1,5-bisphosphate + O2 = 2-phosphoglycolate + (2R)-3-phosphoglycerate + 2 H(+)</text>
        <dbReference type="Rhea" id="RHEA:36631"/>
        <dbReference type="ChEBI" id="CHEBI:15378"/>
        <dbReference type="ChEBI" id="CHEBI:15379"/>
        <dbReference type="ChEBI" id="CHEBI:57870"/>
        <dbReference type="ChEBI" id="CHEBI:58033"/>
        <dbReference type="ChEBI" id="CHEBI:58272"/>
    </reaction>
</comment>
<comment type="cofactor">
    <cofactor evidence="1">
        <name>Mg(2+)</name>
        <dbReference type="ChEBI" id="CHEBI:18420"/>
    </cofactor>
    <text evidence="1">Binds 1 Mg(2+) ion per subunit.</text>
</comment>
<comment type="subunit">
    <text evidence="1">Heterohexadecamer of 8 large chains and 8 small chains; disulfide-linked. The disulfide link is formed within the large subunit homodimers.</text>
</comment>
<comment type="subcellular location">
    <subcellularLocation>
        <location>Plastid</location>
        <location>Chloroplast</location>
    </subcellularLocation>
</comment>
<comment type="PTM">
    <text evidence="1">The disulfide bond which can form in the large chain dimeric partners within the hexadecamer appears to be associated with oxidative stress and protein turnover.</text>
</comment>
<comment type="miscellaneous">
    <text evidence="1">The basic functional RuBisCO is composed of a large chain homodimer in a 'head-to-tail' conformation. In form I RuBisCO this homodimer is arranged in a barrel-like tetramer with the small subunits forming a tetrameric 'cap' on each end of the 'barrel'.</text>
</comment>
<comment type="similarity">
    <text evidence="1">Belongs to the RuBisCO large chain family. Type I subfamily.</text>
</comment>